<name>NADA_PHOLL</name>
<sequence>MNQYIDFNSTIYPFPPKPAFLSKDEKKHYREKIKRLLKQQDAVMVAHYYTDPEIQALAEETGGCVADSLEMARFGNNHPASTLLVAGVRFMGETAKILNPEKRVLMPTLEAECSLDLGCPEKEFTQFCDDHPDRTVVVYANTSAAVKARADWVVTSSIAVELIDYLDSQGKKIIWAPDRHLGNYVRKQTGADILCWQGACIVHDEFKTQALIRVKGLHPDAAVLVHPESPQAVIDLADAVGSTSQLIKSAQSLPHQKLIVATDKGIFYKMQQACPEKQLFAAPTAGEGASCRSCAHCPWMAMNGLQAIVQGLEQGGGQHEILVEKELREKALVPLNRMLDFAAQLK</sequence>
<dbReference type="EC" id="2.5.1.72" evidence="1"/>
<dbReference type="EMBL" id="BX571864">
    <property type="protein sequence ID" value="CAE13761.1"/>
    <property type="molecule type" value="Genomic_DNA"/>
</dbReference>
<dbReference type="RefSeq" id="WP_011145771.1">
    <property type="nucleotide sequence ID" value="NC_005126.1"/>
</dbReference>
<dbReference type="SMR" id="Q7N6S3"/>
<dbReference type="STRING" id="243265.plu1468"/>
<dbReference type="GeneID" id="48847759"/>
<dbReference type="KEGG" id="plu:plu1468"/>
<dbReference type="eggNOG" id="COG0379">
    <property type="taxonomic scope" value="Bacteria"/>
</dbReference>
<dbReference type="HOGENOM" id="CLU_047382_1_0_6"/>
<dbReference type="OrthoDB" id="9801204at2"/>
<dbReference type="UniPathway" id="UPA00253">
    <property type="reaction ID" value="UER00327"/>
</dbReference>
<dbReference type="Proteomes" id="UP000002514">
    <property type="component" value="Chromosome"/>
</dbReference>
<dbReference type="GO" id="GO:0005829">
    <property type="term" value="C:cytosol"/>
    <property type="evidence" value="ECO:0007669"/>
    <property type="project" value="TreeGrafter"/>
</dbReference>
<dbReference type="GO" id="GO:0051539">
    <property type="term" value="F:4 iron, 4 sulfur cluster binding"/>
    <property type="evidence" value="ECO:0007669"/>
    <property type="project" value="UniProtKB-KW"/>
</dbReference>
<dbReference type="GO" id="GO:0046872">
    <property type="term" value="F:metal ion binding"/>
    <property type="evidence" value="ECO:0007669"/>
    <property type="project" value="UniProtKB-KW"/>
</dbReference>
<dbReference type="GO" id="GO:0008987">
    <property type="term" value="F:quinolinate synthetase A activity"/>
    <property type="evidence" value="ECO:0007669"/>
    <property type="project" value="UniProtKB-UniRule"/>
</dbReference>
<dbReference type="GO" id="GO:0034628">
    <property type="term" value="P:'de novo' NAD biosynthetic process from L-aspartate"/>
    <property type="evidence" value="ECO:0007669"/>
    <property type="project" value="TreeGrafter"/>
</dbReference>
<dbReference type="FunFam" id="3.40.50.10800:FF:000003">
    <property type="entry name" value="Quinolinate synthase A"/>
    <property type="match status" value="1"/>
</dbReference>
<dbReference type="Gene3D" id="3.40.50.10800">
    <property type="entry name" value="NadA-like"/>
    <property type="match status" value="3"/>
</dbReference>
<dbReference type="HAMAP" id="MF_00567">
    <property type="entry name" value="NadA_type1"/>
    <property type="match status" value="1"/>
</dbReference>
<dbReference type="InterPro" id="IPR003473">
    <property type="entry name" value="NadA"/>
</dbReference>
<dbReference type="InterPro" id="IPR036094">
    <property type="entry name" value="NadA_sf"/>
</dbReference>
<dbReference type="InterPro" id="IPR023513">
    <property type="entry name" value="Quinolinate_synth_A_type1"/>
</dbReference>
<dbReference type="NCBIfam" id="TIGR00550">
    <property type="entry name" value="nadA"/>
    <property type="match status" value="1"/>
</dbReference>
<dbReference type="NCBIfam" id="NF006877">
    <property type="entry name" value="PRK09375.1-1"/>
    <property type="match status" value="1"/>
</dbReference>
<dbReference type="NCBIfam" id="NF006878">
    <property type="entry name" value="PRK09375.1-2"/>
    <property type="match status" value="1"/>
</dbReference>
<dbReference type="PANTHER" id="PTHR30573:SF0">
    <property type="entry name" value="QUINOLINATE SYNTHASE, CHLOROPLASTIC"/>
    <property type="match status" value="1"/>
</dbReference>
<dbReference type="PANTHER" id="PTHR30573">
    <property type="entry name" value="QUINOLINATE SYNTHETASE A"/>
    <property type="match status" value="1"/>
</dbReference>
<dbReference type="Pfam" id="PF02445">
    <property type="entry name" value="NadA"/>
    <property type="match status" value="1"/>
</dbReference>
<dbReference type="SUPFAM" id="SSF142754">
    <property type="entry name" value="NadA-like"/>
    <property type="match status" value="1"/>
</dbReference>
<organism>
    <name type="scientific">Photorhabdus laumondii subsp. laumondii (strain DSM 15139 / CIP 105565 / TT01)</name>
    <name type="common">Photorhabdus luminescens subsp. laumondii</name>
    <dbReference type="NCBI Taxonomy" id="243265"/>
    <lineage>
        <taxon>Bacteria</taxon>
        <taxon>Pseudomonadati</taxon>
        <taxon>Pseudomonadota</taxon>
        <taxon>Gammaproteobacteria</taxon>
        <taxon>Enterobacterales</taxon>
        <taxon>Morganellaceae</taxon>
        <taxon>Photorhabdus</taxon>
    </lineage>
</organism>
<keyword id="KW-0004">4Fe-4S</keyword>
<keyword id="KW-0963">Cytoplasm</keyword>
<keyword id="KW-0408">Iron</keyword>
<keyword id="KW-0411">Iron-sulfur</keyword>
<keyword id="KW-0479">Metal-binding</keyword>
<keyword id="KW-0662">Pyridine nucleotide biosynthesis</keyword>
<keyword id="KW-1185">Reference proteome</keyword>
<keyword id="KW-0808">Transferase</keyword>
<proteinExistence type="inferred from homology"/>
<feature type="chain" id="PRO_0000155765" description="Quinolinate synthase">
    <location>
        <begin position="1"/>
        <end position="346"/>
    </location>
</feature>
<feature type="binding site" evidence="1">
    <location>
        <position position="47"/>
    </location>
    <ligand>
        <name>iminosuccinate</name>
        <dbReference type="ChEBI" id="CHEBI:77875"/>
    </ligand>
</feature>
<feature type="binding site" evidence="1">
    <location>
        <position position="68"/>
    </location>
    <ligand>
        <name>iminosuccinate</name>
        <dbReference type="ChEBI" id="CHEBI:77875"/>
    </ligand>
</feature>
<feature type="binding site" evidence="1">
    <location>
        <position position="113"/>
    </location>
    <ligand>
        <name>[4Fe-4S] cluster</name>
        <dbReference type="ChEBI" id="CHEBI:49883"/>
    </ligand>
</feature>
<feature type="binding site" evidence="1">
    <location>
        <begin position="139"/>
        <end position="141"/>
    </location>
    <ligand>
        <name>iminosuccinate</name>
        <dbReference type="ChEBI" id="CHEBI:77875"/>
    </ligand>
</feature>
<feature type="binding site" evidence="1">
    <location>
        <position position="156"/>
    </location>
    <ligand>
        <name>iminosuccinate</name>
        <dbReference type="ChEBI" id="CHEBI:77875"/>
    </ligand>
</feature>
<feature type="binding site" evidence="1">
    <location>
        <position position="200"/>
    </location>
    <ligand>
        <name>[4Fe-4S] cluster</name>
        <dbReference type="ChEBI" id="CHEBI:49883"/>
    </ligand>
</feature>
<feature type="binding site" evidence="1">
    <location>
        <begin position="226"/>
        <end position="228"/>
    </location>
    <ligand>
        <name>iminosuccinate</name>
        <dbReference type="ChEBI" id="CHEBI:77875"/>
    </ligand>
</feature>
<feature type="binding site" evidence="1">
    <location>
        <position position="243"/>
    </location>
    <ligand>
        <name>iminosuccinate</name>
        <dbReference type="ChEBI" id="CHEBI:77875"/>
    </ligand>
</feature>
<feature type="binding site" evidence="1">
    <location>
        <position position="297"/>
    </location>
    <ligand>
        <name>[4Fe-4S] cluster</name>
        <dbReference type="ChEBI" id="CHEBI:49883"/>
    </ligand>
</feature>
<gene>
    <name evidence="1" type="primary">nadA</name>
    <name type="ordered locus">plu1468</name>
</gene>
<protein>
    <recommendedName>
        <fullName evidence="1">Quinolinate synthase</fullName>
        <ecNumber evidence="1">2.5.1.72</ecNumber>
    </recommendedName>
</protein>
<reference key="1">
    <citation type="journal article" date="2003" name="Nat. Biotechnol.">
        <title>The genome sequence of the entomopathogenic bacterium Photorhabdus luminescens.</title>
        <authorList>
            <person name="Duchaud E."/>
            <person name="Rusniok C."/>
            <person name="Frangeul L."/>
            <person name="Buchrieser C."/>
            <person name="Givaudan A."/>
            <person name="Taourit S."/>
            <person name="Bocs S."/>
            <person name="Boursaux-Eude C."/>
            <person name="Chandler M."/>
            <person name="Charles J.-F."/>
            <person name="Dassa E."/>
            <person name="Derose R."/>
            <person name="Derzelle S."/>
            <person name="Freyssinet G."/>
            <person name="Gaudriault S."/>
            <person name="Medigue C."/>
            <person name="Lanois A."/>
            <person name="Powell K."/>
            <person name="Siguier P."/>
            <person name="Vincent R."/>
            <person name="Wingate V."/>
            <person name="Zouine M."/>
            <person name="Glaser P."/>
            <person name="Boemare N."/>
            <person name="Danchin A."/>
            <person name="Kunst F."/>
        </authorList>
    </citation>
    <scope>NUCLEOTIDE SEQUENCE [LARGE SCALE GENOMIC DNA]</scope>
    <source>
        <strain>DSM 15139 / CIP 105565 / TT01</strain>
    </source>
</reference>
<comment type="function">
    <text evidence="1">Catalyzes the condensation of iminoaspartate with dihydroxyacetone phosphate to form quinolinate.</text>
</comment>
<comment type="catalytic activity">
    <reaction evidence="1">
        <text>iminosuccinate + dihydroxyacetone phosphate = quinolinate + phosphate + 2 H2O + H(+)</text>
        <dbReference type="Rhea" id="RHEA:25888"/>
        <dbReference type="ChEBI" id="CHEBI:15377"/>
        <dbReference type="ChEBI" id="CHEBI:15378"/>
        <dbReference type="ChEBI" id="CHEBI:29959"/>
        <dbReference type="ChEBI" id="CHEBI:43474"/>
        <dbReference type="ChEBI" id="CHEBI:57642"/>
        <dbReference type="ChEBI" id="CHEBI:77875"/>
        <dbReference type="EC" id="2.5.1.72"/>
    </reaction>
    <physiologicalReaction direction="left-to-right" evidence="1">
        <dbReference type="Rhea" id="RHEA:25889"/>
    </physiologicalReaction>
</comment>
<comment type="cofactor">
    <cofactor evidence="1">
        <name>[4Fe-4S] cluster</name>
        <dbReference type="ChEBI" id="CHEBI:49883"/>
    </cofactor>
    <text evidence="1">Binds 1 [4Fe-4S] cluster per subunit.</text>
</comment>
<comment type="pathway">
    <text evidence="1">Cofactor biosynthesis; NAD(+) biosynthesis; quinolinate from iminoaspartate: step 1/1.</text>
</comment>
<comment type="subcellular location">
    <subcellularLocation>
        <location evidence="1">Cytoplasm</location>
    </subcellularLocation>
</comment>
<comment type="similarity">
    <text evidence="1">Belongs to the quinolinate synthase family. Type 1 subfamily.</text>
</comment>
<evidence type="ECO:0000255" key="1">
    <source>
        <dbReference type="HAMAP-Rule" id="MF_00567"/>
    </source>
</evidence>
<accession>Q7N6S3</accession>